<accession>P26380</accession>
<organism>
    <name type="scientific">Bacillus subtilis (strain 168)</name>
    <dbReference type="NCBI Taxonomy" id="224308"/>
    <lineage>
        <taxon>Bacteria</taxon>
        <taxon>Bacillati</taxon>
        <taxon>Bacillota</taxon>
        <taxon>Bacilli</taxon>
        <taxon>Bacillales</taxon>
        <taxon>Bacillaceae</taxon>
        <taxon>Bacillus</taxon>
    </lineage>
</organism>
<sequence length="163" mass="18215">MMNIVLARIDDRFIHGQILTRWIKVHAADRIIVVSDDIAQDEMRKTLILSVAPSNVKASAVSVSKMAKAFHSPRYEGVTAMLLFENPSDIVSLIEAGVPIKTVNVGGMRFENHRRQITKSVSVTEQDIKAFETLSDKGVKLELRQLPSDASEDFVQILRNVTK</sequence>
<gene>
    <name evidence="5" type="primary">levE</name>
    <name type="synonym">sacL</name>
    <name type="ordered locus">BSU27060</name>
</gene>
<proteinExistence type="evidence at protein level"/>
<comment type="function">
    <text evidence="4 7 8">The phosphoenolpyruvate-dependent sugar phosphotransferase system (sugar PTS), a major carbohydrate active -transport system, catalyzes the phosphorylation of incoming sugar substrates concomitantly with their translocation across the cell membrane. The enzyme II LevDE PTS system is involved in fructose transport.</text>
</comment>
<comment type="function">
    <text evidence="2">LevD and LevE act as negative regulators of the levanase operon. They may be involved in a PTS-mediated phosphorylation of a regulator.</text>
</comment>
<comment type="catalytic activity">
    <reaction evidence="4">
        <text>D-fructose(out) + N(pros)-phospho-L-histidyl-[protein] = D-fructose 1-phosphate(in) + L-histidyl-[protein]</text>
        <dbReference type="Rhea" id="RHEA:49252"/>
        <dbReference type="Rhea" id="RHEA-COMP:9745"/>
        <dbReference type="Rhea" id="RHEA-COMP:9746"/>
        <dbReference type="ChEBI" id="CHEBI:29979"/>
        <dbReference type="ChEBI" id="CHEBI:37721"/>
        <dbReference type="ChEBI" id="CHEBI:58674"/>
        <dbReference type="ChEBI" id="CHEBI:64837"/>
        <dbReference type="EC" id="2.7.1.202"/>
    </reaction>
</comment>
<comment type="subcellular location">
    <subcellularLocation>
        <location evidence="7">Cytoplasm</location>
    </subcellularLocation>
</comment>
<comment type="induction">
    <text evidence="3">By fructose and LevR.</text>
</comment>
<comment type="domain">
    <text evidence="1">The PTS EIIB type-4 domain is phosphorylated by phospho-EIIA on a histidyl residue. Then, it transfers the phosphoryl group to the sugar substrate concomitantly with the sugar uptake processed by the PTS EIIC type-4 domain.</text>
</comment>
<comment type="sequence caution" evidence="6">
    <conflict type="erroneous initiation">
        <sequence resource="EMBL-CDS" id="CAA63462"/>
    </conflict>
    <text>Truncated N-terminus.</text>
</comment>
<comment type="sequence caution" evidence="6">
    <conflict type="erroneous initiation">
        <sequence resource="EMBL-CDS" id="CAB14648"/>
    </conflict>
    <text>Truncated N-terminus.</text>
</comment>
<protein>
    <recommendedName>
        <fullName evidence="5">PTS system fructose-specific EIIB component</fullName>
        <ecNumber evidence="4">2.7.1.202</ecNumber>
    </recommendedName>
    <alternativeName>
        <fullName evidence="5">EIIB-Fru</fullName>
    </alternativeName>
    <alternativeName>
        <fullName evidence="5">Fructose-specific phosphotransferase enzyme IIB component</fullName>
    </alternativeName>
    <alternativeName>
        <fullName evidence="5">lev-PTS</fullName>
    </alternativeName>
    <alternativeName>
        <fullName evidence="5">p18</fullName>
    </alternativeName>
</protein>
<keyword id="KW-0002">3D-structure</keyword>
<keyword id="KW-0963">Cytoplasm</keyword>
<keyword id="KW-0418">Kinase</keyword>
<keyword id="KW-0597">Phosphoprotein</keyword>
<keyword id="KW-0598">Phosphotransferase system</keyword>
<keyword id="KW-1185">Reference proteome</keyword>
<keyword id="KW-0762">Sugar transport</keyword>
<keyword id="KW-0808">Transferase</keyword>
<keyword id="KW-0813">Transport</keyword>
<reference key="1">
    <citation type="journal article" date="1990" name="J. Mol. Biol.">
        <title>Levanase operon of Bacillus subtilis includes a fructose-specific phosphotransferase system regulating the expression of the operon.</title>
        <authorList>
            <person name="Martin-Verstraete I."/>
            <person name="Debarbouille M."/>
            <person name="Klier A."/>
            <person name="Rapoport G."/>
        </authorList>
    </citation>
    <scope>NUCLEOTIDE SEQUENCE [GENOMIC DNA]</scope>
    <scope>FUNCTION</scope>
    <scope>SUBCELLULAR LOCATION</scope>
    <source>
        <strain>168</strain>
    </source>
</reference>
<reference key="2">
    <citation type="journal article" date="1997" name="Microbiology">
        <title>A 23911 bp region of the Bacillus subtilis genome comprising genes located upstream and downstream of the lev operon.</title>
        <authorList>
            <person name="Parro V."/>
            <person name="San Roman M."/>
            <person name="Galindo I."/>
            <person name="Purnelle B."/>
            <person name="Bolotin A."/>
            <person name="Sorokin A."/>
            <person name="Mellado R.P."/>
        </authorList>
    </citation>
    <scope>NUCLEOTIDE SEQUENCE [GENOMIC DNA]</scope>
    <source>
        <strain>168</strain>
    </source>
</reference>
<reference key="3">
    <citation type="journal article" date="1997" name="Nature">
        <title>The complete genome sequence of the Gram-positive bacterium Bacillus subtilis.</title>
        <authorList>
            <person name="Kunst F."/>
            <person name="Ogasawara N."/>
            <person name="Moszer I."/>
            <person name="Albertini A.M."/>
            <person name="Alloni G."/>
            <person name="Azevedo V."/>
            <person name="Bertero M.G."/>
            <person name="Bessieres P."/>
            <person name="Bolotin A."/>
            <person name="Borchert S."/>
            <person name="Borriss R."/>
            <person name="Boursier L."/>
            <person name="Brans A."/>
            <person name="Braun M."/>
            <person name="Brignell S.C."/>
            <person name="Bron S."/>
            <person name="Brouillet S."/>
            <person name="Bruschi C.V."/>
            <person name="Caldwell B."/>
            <person name="Capuano V."/>
            <person name="Carter N.M."/>
            <person name="Choi S.-K."/>
            <person name="Codani J.-J."/>
            <person name="Connerton I.F."/>
            <person name="Cummings N.J."/>
            <person name="Daniel R.A."/>
            <person name="Denizot F."/>
            <person name="Devine K.M."/>
            <person name="Duesterhoeft A."/>
            <person name="Ehrlich S.D."/>
            <person name="Emmerson P.T."/>
            <person name="Entian K.-D."/>
            <person name="Errington J."/>
            <person name="Fabret C."/>
            <person name="Ferrari E."/>
            <person name="Foulger D."/>
            <person name="Fritz C."/>
            <person name="Fujita M."/>
            <person name="Fujita Y."/>
            <person name="Fuma S."/>
            <person name="Galizzi A."/>
            <person name="Galleron N."/>
            <person name="Ghim S.-Y."/>
            <person name="Glaser P."/>
            <person name="Goffeau A."/>
            <person name="Golightly E.J."/>
            <person name="Grandi G."/>
            <person name="Guiseppi G."/>
            <person name="Guy B.J."/>
            <person name="Haga K."/>
            <person name="Haiech J."/>
            <person name="Harwood C.R."/>
            <person name="Henaut A."/>
            <person name="Hilbert H."/>
            <person name="Holsappel S."/>
            <person name="Hosono S."/>
            <person name="Hullo M.-F."/>
            <person name="Itaya M."/>
            <person name="Jones L.-M."/>
            <person name="Joris B."/>
            <person name="Karamata D."/>
            <person name="Kasahara Y."/>
            <person name="Klaerr-Blanchard M."/>
            <person name="Klein C."/>
            <person name="Kobayashi Y."/>
            <person name="Koetter P."/>
            <person name="Koningstein G."/>
            <person name="Krogh S."/>
            <person name="Kumano M."/>
            <person name="Kurita K."/>
            <person name="Lapidus A."/>
            <person name="Lardinois S."/>
            <person name="Lauber J."/>
            <person name="Lazarevic V."/>
            <person name="Lee S.-M."/>
            <person name="Levine A."/>
            <person name="Liu H."/>
            <person name="Masuda S."/>
            <person name="Mauel C."/>
            <person name="Medigue C."/>
            <person name="Medina N."/>
            <person name="Mellado R.P."/>
            <person name="Mizuno M."/>
            <person name="Moestl D."/>
            <person name="Nakai S."/>
            <person name="Noback M."/>
            <person name="Noone D."/>
            <person name="O'Reilly M."/>
            <person name="Ogawa K."/>
            <person name="Ogiwara A."/>
            <person name="Oudega B."/>
            <person name="Park S.-H."/>
            <person name="Parro V."/>
            <person name="Pohl T.M."/>
            <person name="Portetelle D."/>
            <person name="Porwollik S."/>
            <person name="Prescott A.M."/>
            <person name="Presecan E."/>
            <person name="Pujic P."/>
            <person name="Purnelle B."/>
            <person name="Rapoport G."/>
            <person name="Rey M."/>
            <person name="Reynolds S."/>
            <person name="Rieger M."/>
            <person name="Rivolta C."/>
            <person name="Rocha E."/>
            <person name="Roche B."/>
            <person name="Rose M."/>
            <person name="Sadaie Y."/>
            <person name="Sato T."/>
            <person name="Scanlan E."/>
            <person name="Schleich S."/>
            <person name="Schroeter R."/>
            <person name="Scoffone F."/>
            <person name="Sekiguchi J."/>
            <person name="Sekowska A."/>
            <person name="Seror S.J."/>
            <person name="Serror P."/>
            <person name="Shin B.-S."/>
            <person name="Soldo B."/>
            <person name="Sorokin A."/>
            <person name="Tacconi E."/>
            <person name="Takagi T."/>
            <person name="Takahashi H."/>
            <person name="Takemaru K."/>
            <person name="Takeuchi M."/>
            <person name="Tamakoshi A."/>
            <person name="Tanaka T."/>
            <person name="Terpstra P."/>
            <person name="Tognoni A."/>
            <person name="Tosato V."/>
            <person name="Uchiyama S."/>
            <person name="Vandenbol M."/>
            <person name="Vannier F."/>
            <person name="Vassarotti A."/>
            <person name="Viari A."/>
            <person name="Wambutt R."/>
            <person name="Wedler E."/>
            <person name="Wedler H."/>
            <person name="Weitzenegger T."/>
            <person name="Winters P."/>
            <person name="Wipat A."/>
            <person name="Yamamoto H."/>
            <person name="Yamane K."/>
            <person name="Yasumoto K."/>
            <person name="Yata K."/>
            <person name="Yoshida K."/>
            <person name="Yoshikawa H.-F."/>
            <person name="Zumstein E."/>
            <person name="Yoshikawa H."/>
            <person name="Danchin A."/>
        </authorList>
    </citation>
    <scope>NUCLEOTIDE SEQUENCE [LARGE SCALE GENOMIC DNA]</scope>
    <source>
        <strain>168</strain>
    </source>
</reference>
<reference key="4">
    <citation type="journal article" date="1989" name="J. Bacteriol.">
        <title>Induction and metabolite regulation of levanase synthesis in Bacillus subtilis.</title>
        <authorList>
            <person name="Martin I."/>
            <person name="Debarbouille M."/>
            <person name="Klier A."/>
            <person name="Rapoport G."/>
        </authorList>
    </citation>
    <scope>INDUCTION</scope>
</reference>
<reference key="5">
    <citation type="journal article" date="1997" name="Biochemistry">
        <title>Protein phosphorylation chain of a Bacillus subtilis fructose-specific phosphotransferase system and its participation in regulation of the expression of the lev operon.</title>
        <authorList>
            <person name="Charrier V."/>
            <person name="Deutscher J."/>
            <person name="Galinier A."/>
            <person name="Martin-Verstraete I."/>
        </authorList>
    </citation>
    <scope>FUNCTION</scope>
    <scope>CATALYTIC ACTIVITY</scope>
    <scope>MUTAGENESIS OF HIS-15</scope>
    <scope>PHOSPHORYLATION AT HIS-15</scope>
    <scope>ACTIVE SITE</scope>
</reference>
<reference key="6">
    <citation type="journal article" date="1998" name="J. Mol. Biol.">
        <title>Crystal structure of the IIB subunit of a fructose permease (IIBLev) from Bacillus subtilis.</title>
        <authorList>
            <person name="Schauder S."/>
            <person name="Nunn R.S."/>
            <person name="Lanz R."/>
            <person name="Erni B."/>
            <person name="Schirmer T."/>
        </authorList>
    </citation>
    <scope>X-RAY CRYSTALLOGRAPHY (2.9 ANGSTROMS)</scope>
    <scope>FUNCTION</scope>
    <scope>ACTIVE SITE</scope>
</reference>
<evidence type="ECO:0000255" key="1">
    <source>
        <dbReference type="PROSITE-ProRule" id="PRU00424"/>
    </source>
</evidence>
<evidence type="ECO:0000269" key="2">
    <source>
    </source>
</evidence>
<evidence type="ECO:0000269" key="3">
    <source>
    </source>
</evidence>
<evidence type="ECO:0000269" key="4">
    <source>
    </source>
</evidence>
<evidence type="ECO:0000303" key="5">
    <source>
    </source>
</evidence>
<evidence type="ECO:0000305" key="6"/>
<evidence type="ECO:0000305" key="7">
    <source>
    </source>
</evidence>
<evidence type="ECO:0000305" key="8">
    <source>
    </source>
</evidence>
<evidence type="ECO:0007829" key="9">
    <source>
        <dbReference type="PDB" id="1BLE"/>
    </source>
</evidence>
<feature type="chain" id="PRO_0000186524" description="PTS system fructose-specific EIIB component">
    <location>
        <begin position="1"/>
        <end position="163"/>
    </location>
</feature>
<feature type="domain" description="PTS EIIB type-4" evidence="1">
    <location>
        <begin position="1"/>
        <end position="163"/>
    </location>
</feature>
<feature type="active site" description="Pros-phosphohistidine intermediate" evidence="4 8">
    <location>
        <position position="15"/>
    </location>
</feature>
<feature type="modified residue" description="Phosphohistidine; by EIIA" evidence="1 4">
    <location>
        <position position="15"/>
    </location>
</feature>
<feature type="mutagenesis site" description="Unable to be phosphorylated." evidence="4">
    <original>H</original>
    <variation>A</variation>
    <location>
        <position position="15"/>
    </location>
</feature>
<feature type="strand" evidence="9">
    <location>
        <begin position="3"/>
        <end position="10"/>
    </location>
</feature>
<feature type="helix" evidence="9">
    <location>
        <begin position="18"/>
        <end position="26"/>
    </location>
</feature>
<feature type="strand" evidence="9">
    <location>
        <begin position="29"/>
        <end position="34"/>
    </location>
</feature>
<feature type="helix" evidence="9">
    <location>
        <begin position="36"/>
        <end position="40"/>
    </location>
</feature>
<feature type="helix" evidence="9">
    <location>
        <begin position="42"/>
        <end position="49"/>
    </location>
</feature>
<feature type="strand" evidence="9">
    <location>
        <begin position="56"/>
        <end position="61"/>
    </location>
</feature>
<feature type="helix" evidence="9">
    <location>
        <begin position="63"/>
        <end position="71"/>
    </location>
</feature>
<feature type="turn" evidence="9">
    <location>
        <begin position="74"/>
        <end position="77"/>
    </location>
</feature>
<feature type="strand" evidence="9">
    <location>
        <begin position="79"/>
        <end position="87"/>
    </location>
</feature>
<feature type="helix" evidence="9">
    <location>
        <begin position="88"/>
        <end position="94"/>
    </location>
</feature>
<feature type="turn" evidence="9">
    <location>
        <begin position="95"/>
        <end position="97"/>
    </location>
</feature>
<feature type="strand" evidence="9">
    <location>
        <begin position="102"/>
        <end position="108"/>
    </location>
</feature>
<feature type="strand" evidence="9">
    <location>
        <begin position="114"/>
        <end position="116"/>
    </location>
</feature>
<feature type="strand" evidence="9">
    <location>
        <begin position="118"/>
        <end position="123"/>
    </location>
</feature>
<feature type="helix" evidence="9">
    <location>
        <begin position="125"/>
        <end position="136"/>
    </location>
</feature>
<feature type="strand" evidence="9">
    <location>
        <begin position="140"/>
        <end position="143"/>
    </location>
</feature>
<feature type="helix" evidence="9">
    <location>
        <begin position="154"/>
        <end position="159"/>
    </location>
</feature>
<name>PTFB_BACSU</name>
<dbReference type="EC" id="2.7.1.202" evidence="4"/>
<dbReference type="EMBL" id="X56098">
    <property type="protein sequence ID" value="CAA39578.1"/>
    <property type="molecule type" value="Genomic_DNA"/>
</dbReference>
<dbReference type="EMBL" id="X92868">
    <property type="protein sequence ID" value="CAA63462.1"/>
    <property type="status" value="ALT_INIT"/>
    <property type="molecule type" value="Genomic_DNA"/>
</dbReference>
<dbReference type="EMBL" id="AL009126">
    <property type="protein sequence ID" value="CAB14648.1"/>
    <property type="status" value="ALT_INIT"/>
    <property type="molecule type" value="Genomic_DNA"/>
</dbReference>
<dbReference type="PIR" id="S11399">
    <property type="entry name" value="S11399"/>
</dbReference>
<dbReference type="RefSeq" id="NP_390584.1">
    <property type="nucleotide sequence ID" value="NC_000964.3"/>
</dbReference>
<dbReference type="PDB" id="1BLE">
    <property type="method" value="X-ray"/>
    <property type="resolution" value="2.90 A"/>
    <property type="chains" value="A=1-163"/>
</dbReference>
<dbReference type="PDBsum" id="1BLE"/>
<dbReference type="SMR" id="P26380"/>
<dbReference type="FunCoup" id="P26380">
    <property type="interactions" value="65"/>
</dbReference>
<dbReference type="STRING" id="224308.BSU27060"/>
<dbReference type="TCDB" id="4.A.6.1.2">
    <property type="family name" value="the pts mannose-fructose-sorbose (man) family"/>
</dbReference>
<dbReference type="iPTMnet" id="P26380"/>
<dbReference type="PaxDb" id="224308-BSU27060"/>
<dbReference type="EnsemblBacteria" id="CAB14648">
    <property type="protein sequence ID" value="CAB14648"/>
    <property type="gene ID" value="BSU_27060"/>
</dbReference>
<dbReference type="GeneID" id="937078"/>
<dbReference type="KEGG" id="bsu:BSU27060"/>
<dbReference type="PATRIC" id="fig|224308.43.peg.2822"/>
<dbReference type="eggNOG" id="COG3444">
    <property type="taxonomic scope" value="Bacteria"/>
</dbReference>
<dbReference type="InParanoid" id="P26380"/>
<dbReference type="OrthoDB" id="9788818at2"/>
<dbReference type="BioCyc" id="BSUB:BSU27060-MONOMER"/>
<dbReference type="EvolutionaryTrace" id="P26380"/>
<dbReference type="Proteomes" id="UP000001570">
    <property type="component" value="Chromosome"/>
</dbReference>
<dbReference type="GO" id="GO:0005737">
    <property type="term" value="C:cytoplasm"/>
    <property type="evidence" value="ECO:0007669"/>
    <property type="project" value="UniProtKB-SubCell"/>
</dbReference>
<dbReference type="GO" id="GO:0016301">
    <property type="term" value="F:kinase activity"/>
    <property type="evidence" value="ECO:0007669"/>
    <property type="project" value="UniProtKB-KW"/>
</dbReference>
<dbReference type="GO" id="GO:0008982">
    <property type="term" value="F:protein-N(PI)-phosphohistidine-sugar phosphotransferase activity"/>
    <property type="evidence" value="ECO:0007669"/>
    <property type="project" value="InterPro"/>
</dbReference>
<dbReference type="GO" id="GO:0009401">
    <property type="term" value="P:phosphoenolpyruvate-dependent sugar phosphotransferase system"/>
    <property type="evidence" value="ECO:0007669"/>
    <property type="project" value="UniProtKB-KW"/>
</dbReference>
<dbReference type="CDD" id="cd00001">
    <property type="entry name" value="PTS_IIB_man"/>
    <property type="match status" value="1"/>
</dbReference>
<dbReference type="Gene3D" id="3.40.35.10">
    <property type="entry name" value="Phosphotransferase system, sorbose subfamily IIB component"/>
    <property type="match status" value="1"/>
</dbReference>
<dbReference type="InterPro" id="IPR004720">
    <property type="entry name" value="PTS_IIB_sorbose-sp"/>
</dbReference>
<dbReference type="InterPro" id="IPR036667">
    <property type="entry name" value="PTS_IIB_sorbose-sp_sf"/>
</dbReference>
<dbReference type="InterPro" id="IPR018455">
    <property type="entry name" value="PTS_IIB_sorbose-sp_subgr"/>
</dbReference>
<dbReference type="NCBIfam" id="TIGR00854">
    <property type="entry name" value="pts-sorbose"/>
    <property type="match status" value="1"/>
</dbReference>
<dbReference type="Pfam" id="PF03830">
    <property type="entry name" value="PTSIIB_sorb"/>
    <property type="match status" value="1"/>
</dbReference>
<dbReference type="SUPFAM" id="SSF52728">
    <property type="entry name" value="PTS IIb component"/>
    <property type="match status" value="1"/>
</dbReference>
<dbReference type="PROSITE" id="PS51101">
    <property type="entry name" value="PTS_EIIB_TYPE_4"/>
    <property type="match status" value="1"/>
</dbReference>